<reference key="1">
    <citation type="journal article" date="2009" name="J. Bacteriol.">
        <title>Genome sequence of Azotobacter vinelandii, an obligate aerobe specialized to support diverse anaerobic metabolic processes.</title>
        <authorList>
            <person name="Setubal J.C."/>
            <person name="Dos Santos P."/>
            <person name="Goldman B.S."/>
            <person name="Ertesvaag H."/>
            <person name="Espin G."/>
            <person name="Rubio L.M."/>
            <person name="Valla S."/>
            <person name="Almeida N.F."/>
            <person name="Balasubramanian D."/>
            <person name="Cromes L."/>
            <person name="Curatti L."/>
            <person name="Du Z."/>
            <person name="Godsy E."/>
            <person name="Goodner B."/>
            <person name="Hellner-Burris K."/>
            <person name="Hernandez J.A."/>
            <person name="Houmiel K."/>
            <person name="Imperial J."/>
            <person name="Kennedy C."/>
            <person name="Larson T.J."/>
            <person name="Latreille P."/>
            <person name="Ligon L.S."/>
            <person name="Lu J."/>
            <person name="Maerk M."/>
            <person name="Miller N.M."/>
            <person name="Norton S."/>
            <person name="O'Carroll I.P."/>
            <person name="Paulsen I."/>
            <person name="Raulfs E.C."/>
            <person name="Roemer R."/>
            <person name="Rosser J."/>
            <person name="Segura D."/>
            <person name="Slater S."/>
            <person name="Stricklin S.L."/>
            <person name="Studholme D.J."/>
            <person name="Sun J."/>
            <person name="Viana C.J."/>
            <person name="Wallin E."/>
            <person name="Wang B."/>
            <person name="Wheeler C."/>
            <person name="Zhu H."/>
            <person name="Dean D.R."/>
            <person name="Dixon R."/>
            <person name="Wood D."/>
        </authorList>
    </citation>
    <scope>NUCLEOTIDE SEQUENCE [LARGE SCALE GENOMIC DNA]</scope>
    <source>
        <strain>DJ / ATCC BAA-1303</strain>
    </source>
</reference>
<accession>C1DEA5</accession>
<keyword id="KW-0687">Ribonucleoprotein</keyword>
<keyword id="KW-0689">Ribosomal protein</keyword>
<gene>
    <name evidence="1" type="primary">rpmA</name>
    <name type="ordered locus">Avin_40780</name>
</gene>
<protein>
    <recommendedName>
        <fullName evidence="1">Large ribosomal subunit protein bL27</fullName>
    </recommendedName>
    <alternativeName>
        <fullName evidence="3">50S ribosomal protein L27</fullName>
    </alternativeName>
</protein>
<name>RL27_AZOVD</name>
<organism>
    <name type="scientific">Azotobacter vinelandii (strain DJ / ATCC BAA-1303)</name>
    <dbReference type="NCBI Taxonomy" id="322710"/>
    <lineage>
        <taxon>Bacteria</taxon>
        <taxon>Pseudomonadati</taxon>
        <taxon>Pseudomonadota</taxon>
        <taxon>Gammaproteobacteria</taxon>
        <taxon>Pseudomonadales</taxon>
        <taxon>Pseudomonadaceae</taxon>
        <taxon>Azotobacter</taxon>
    </lineage>
</organism>
<dbReference type="EMBL" id="CP001157">
    <property type="protein sequence ID" value="ACO80213.1"/>
    <property type="molecule type" value="Genomic_DNA"/>
</dbReference>
<dbReference type="RefSeq" id="WP_012702586.1">
    <property type="nucleotide sequence ID" value="NC_012560.1"/>
</dbReference>
<dbReference type="SMR" id="C1DEA5"/>
<dbReference type="STRING" id="322710.Avin_40780"/>
<dbReference type="EnsemblBacteria" id="ACO80213">
    <property type="protein sequence ID" value="ACO80213"/>
    <property type="gene ID" value="Avin_40780"/>
</dbReference>
<dbReference type="GeneID" id="88187016"/>
<dbReference type="KEGG" id="avn:Avin_40780"/>
<dbReference type="eggNOG" id="COG0211">
    <property type="taxonomic scope" value="Bacteria"/>
</dbReference>
<dbReference type="HOGENOM" id="CLU_095424_4_1_6"/>
<dbReference type="OrthoDB" id="9803474at2"/>
<dbReference type="Proteomes" id="UP000002424">
    <property type="component" value="Chromosome"/>
</dbReference>
<dbReference type="GO" id="GO:0022625">
    <property type="term" value="C:cytosolic large ribosomal subunit"/>
    <property type="evidence" value="ECO:0007669"/>
    <property type="project" value="TreeGrafter"/>
</dbReference>
<dbReference type="GO" id="GO:0003735">
    <property type="term" value="F:structural constituent of ribosome"/>
    <property type="evidence" value="ECO:0007669"/>
    <property type="project" value="InterPro"/>
</dbReference>
<dbReference type="GO" id="GO:0006412">
    <property type="term" value="P:translation"/>
    <property type="evidence" value="ECO:0007669"/>
    <property type="project" value="UniProtKB-UniRule"/>
</dbReference>
<dbReference type="FunFam" id="2.40.50.100:FF:000001">
    <property type="entry name" value="50S ribosomal protein L27"/>
    <property type="match status" value="1"/>
</dbReference>
<dbReference type="Gene3D" id="2.40.50.100">
    <property type="match status" value="1"/>
</dbReference>
<dbReference type="HAMAP" id="MF_00539">
    <property type="entry name" value="Ribosomal_bL27"/>
    <property type="match status" value="1"/>
</dbReference>
<dbReference type="InterPro" id="IPR001684">
    <property type="entry name" value="Ribosomal_bL27"/>
</dbReference>
<dbReference type="InterPro" id="IPR018261">
    <property type="entry name" value="Ribosomal_bL27_CS"/>
</dbReference>
<dbReference type="NCBIfam" id="TIGR00062">
    <property type="entry name" value="L27"/>
    <property type="match status" value="1"/>
</dbReference>
<dbReference type="PANTHER" id="PTHR15893:SF0">
    <property type="entry name" value="LARGE RIBOSOMAL SUBUNIT PROTEIN BL27M"/>
    <property type="match status" value="1"/>
</dbReference>
<dbReference type="PANTHER" id="PTHR15893">
    <property type="entry name" value="RIBOSOMAL PROTEIN L27"/>
    <property type="match status" value="1"/>
</dbReference>
<dbReference type="Pfam" id="PF01016">
    <property type="entry name" value="Ribosomal_L27"/>
    <property type="match status" value="1"/>
</dbReference>
<dbReference type="PRINTS" id="PR00063">
    <property type="entry name" value="RIBOSOMALL27"/>
</dbReference>
<dbReference type="SUPFAM" id="SSF110324">
    <property type="entry name" value="Ribosomal L27 protein-like"/>
    <property type="match status" value="1"/>
</dbReference>
<dbReference type="PROSITE" id="PS00831">
    <property type="entry name" value="RIBOSOMAL_L27"/>
    <property type="match status" value="1"/>
</dbReference>
<proteinExistence type="inferred from homology"/>
<feature type="chain" id="PRO_1000211917" description="Large ribosomal subunit protein bL27">
    <location>
        <begin position="1"/>
        <end position="85"/>
    </location>
</feature>
<feature type="region of interest" description="Disordered" evidence="2">
    <location>
        <begin position="1"/>
        <end position="20"/>
    </location>
</feature>
<comment type="similarity">
    <text evidence="1">Belongs to the bacterial ribosomal protein bL27 family.</text>
</comment>
<sequence length="85" mass="9095">MAHKKAGGSTRNGRDSESKRLGVKIFGGQAIRAGNIIVRQRGTQFHPGFGVGIGKDHTLFAKVEGVVKFEVKGAFGRRYVSVVPA</sequence>
<evidence type="ECO:0000255" key="1">
    <source>
        <dbReference type="HAMAP-Rule" id="MF_00539"/>
    </source>
</evidence>
<evidence type="ECO:0000256" key="2">
    <source>
        <dbReference type="SAM" id="MobiDB-lite"/>
    </source>
</evidence>
<evidence type="ECO:0000305" key="3"/>